<protein>
    <recommendedName>
        <fullName evidence="1">Anti-adapter protein IraM</fullName>
    </recommendedName>
</protein>
<name>IRAM_ECO27</name>
<comment type="function">
    <text evidence="1">Inhibits RpoS proteolysis by regulating RssB activity, thereby increasing the stability of the sigma stress factor RpoS during magnesium starvation.</text>
</comment>
<comment type="subcellular location">
    <subcellularLocation>
        <location evidence="1">Cytoplasm</location>
    </subcellularLocation>
</comment>
<comment type="similarity">
    <text evidence="1">Belongs to the IraM/RssC family.</text>
</comment>
<feature type="chain" id="PRO_1000164552" description="Anti-adapter protein IraM">
    <location>
        <begin position="1"/>
        <end position="111"/>
    </location>
</feature>
<keyword id="KW-0963">Cytoplasm</keyword>
<keyword id="KW-1185">Reference proteome</keyword>
<keyword id="KW-0346">Stress response</keyword>
<evidence type="ECO:0000255" key="1">
    <source>
        <dbReference type="HAMAP-Rule" id="MF_01199"/>
    </source>
</evidence>
<proteinExistence type="inferred from homology"/>
<accession>B7UQ15</accession>
<dbReference type="EMBL" id="FM180568">
    <property type="protein sequence ID" value="CAS08793.1"/>
    <property type="molecule type" value="Genomic_DNA"/>
</dbReference>
<dbReference type="RefSeq" id="WP_000871291.1">
    <property type="nucleotide sequence ID" value="NC_011601.1"/>
</dbReference>
<dbReference type="SMR" id="B7UQ15"/>
<dbReference type="KEGG" id="ecg:E2348C_1245"/>
<dbReference type="HOGENOM" id="CLU_143527_1_0_6"/>
<dbReference type="Proteomes" id="UP000008205">
    <property type="component" value="Chromosome"/>
</dbReference>
<dbReference type="GO" id="GO:0005737">
    <property type="term" value="C:cytoplasm"/>
    <property type="evidence" value="ECO:0007669"/>
    <property type="project" value="UniProtKB-SubCell"/>
</dbReference>
<dbReference type="GO" id="GO:0009267">
    <property type="term" value="P:cellular response to starvation"/>
    <property type="evidence" value="ECO:0007669"/>
    <property type="project" value="UniProtKB-UniRule"/>
</dbReference>
<dbReference type="Gene3D" id="2.40.50.650">
    <property type="match status" value="1"/>
</dbReference>
<dbReference type="HAMAP" id="MF_01199">
    <property type="entry name" value="Anti_adapt_IraM"/>
    <property type="match status" value="1"/>
</dbReference>
<dbReference type="InterPro" id="IPR014448">
    <property type="entry name" value="Anti-adapter_IraM"/>
</dbReference>
<dbReference type="InterPro" id="IPR038679">
    <property type="entry name" value="PmrD_sf"/>
</dbReference>
<dbReference type="NCBIfam" id="NF007393">
    <property type="entry name" value="PRK09919.1"/>
    <property type="match status" value="1"/>
</dbReference>
<dbReference type="PIRSF" id="PIRSF007036">
    <property type="entry name" value="Elb1"/>
    <property type="match status" value="1"/>
</dbReference>
<organism>
    <name type="scientific">Escherichia coli O127:H6 (strain E2348/69 / EPEC)</name>
    <dbReference type="NCBI Taxonomy" id="574521"/>
    <lineage>
        <taxon>Bacteria</taxon>
        <taxon>Pseudomonadati</taxon>
        <taxon>Pseudomonadota</taxon>
        <taxon>Gammaproteobacteria</taxon>
        <taxon>Enterobacterales</taxon>
        <taxon>Enterobacteriaceae</taxon>
        <taxon>Escherichia</taxon>
    </lineage>
</organism>
<reference key="1">
    <citation type="journal article" date="2009" name="J. Bacteriol.">
        <title>Complete genome sequence and comparative genome analysis of enteropathogenic Escherichia coli O127:H6 strain E2348/69.</title>
        <authorList>
            <person name="Iguchi A."/>
            <person name="Thomson N.R."/>
            <person name="Ogura Y."/>
            <person name="Saunders D."/>
            <person name="Ooka T."/>
            <person name="Henderson I.R."/>
            <person name="Harris D."/>
            <person name="Asadulghani M."/>
            <person name="Kurokawa K."/>
            <person name="Dean P."/>
            <person name="Kenny B."/>
            <person name="Quail M.A."/>
            <person name="Thurston S."/>
            <person name="Dougan G."/>
            <person name="Hayashi T."/>
            <person name="Parkhill J."/>
            <person name="Frankel G."/>
        </authorList>
    </citation>
    <scope>NUCLEOTIDE SEQUENCE [LARGE SCALE GENOMIC DNA]</scope>
    <source>
        <strain>E2348/69 / EPEC</strain>
    </source>
</reference>
<sequence>MKWIVIDTVIQPSCGISFSVIWSKIKLIIWYQSDAFLPPESIFTLTHTGIMLNNKVLPVTIYNVVPFNKTFWNLIKNSQECPTNTDNVLNECFNNRCTLQICPYGLKQQSP</sequence>
<gene>
    <name evidence="1" type="primary">iraM</name>
    <name type="ordered locus">E2348C_1245</name>
</gene>